<accession>A5F7B9</accession>
<accession>C3M1H5</accession>
<evidence type="ECO:0000255" key="1">
    <source>
        <dbReference type="HAMAP-Rule" id="MF_01235"/>
    </source>
</evidence>
<gene>
    <name evidence="1" type="primary">nanE</name>
    <name type="ordered locus">VC0395_A1378</name>
    <name type="ordered locus">VC395_1895</name>
</gene>
<feature type="chain" id="PRO_1000073170" description="Putative N-acetylmannosamine-6-phosphate 2-epimerase">
    <location>
        <begin position="1"/>
        <end position="240"/>
    </location>
</feature>
<organism>
    <name type="scientific">Vibrio cholerae serotype O1 (strain ATCC 39541 / Classical Ogawa 395 / O395)</name>
    <dbReference type="NCBI Taxonomy" id="345073"/>
    <lineage>
        <taxon>Bacteria</taxon>
        <taxon>Pseudomonadati</taxon>
        <taxon>Pseudomonadota</taxon>
        <taxon>Gammaproteobacteria</taxon>
        <taxon>Vibrionales</taxon>
        <taxon>Vibrionaceae</taxon>
        <taxon>Vibrio</taxon>
    </lineage>
</organism>
<name>NANE_VIBC3</name>
<proteinExistence type="inferred from homology"/>
<comment type="function">
    <text evidence="1">Converts N-acetylmannosamine-6-phosphate (ManNAc-6-P) to N-acetylglucosamine-6-phosphate (GlcNAc-6-P).</text>
</comment>
<comment type="catalytic activity">
    <reaction evidence="1">
        <text>an N-acyl-D-glucosamine 6-phosphate = an N-acyl-D-mannosamine 6-phosphate</text>
        <dbReference type="Rhea" id="RHEA:23932"/>
        <dbReference type="ChEBI" id="CHEBI:57599"/>
        <dbReference type="ChEBI" id="CHEBI:57666"/>
        <dbReference type="EC" id="5.1.3.9"/>
    </reaction>
</comment>
<comment type="pathway">
    <text evidence="1">Amino-sugar metabolism; N-acetylneuraminate degradation; D-fructose 6-phosphate from N-acetylneuraminate: step 3/5.</text>
</comment>
<comment type="similarity">
    <text evidence="1">Belongs to the NanE family.</text>
</comment>
<dbReference type="EC" id="5.1.3.9" evidence="1"/>
<dbReference type="EMBL" id="CP000627">
    <property type="protein sequence ID" value="ABQ20468.1"/>
    <property type="molecule type" value="Genomic_DNA"/>
</dbReference>
<dbReference type="EMBL" id="CP001235">
    <property type="protein sequence ID" value="ACP09891.1"/>
    <property type="molecule type" value="Genomic_DNA"/>
</dbReference>
<dbReference type="RefSeq" id="WP_012034277.1">
    <property type="nucleotide sequence ID" value="NZ_JAACZH010000016.1"/>
</dbReference>
<dbReference type="SMR" id="A5F7B9"/>
<dbReference type="KEGG" id="vco:VC0395_A1378"/>
<dbReference type="KEGG" id="vcr:VC395_1895"/>
<dbReference type="PATRIC" id="fig|345073.21.peg.1835"/>
<dbReference type="eggNOG" id="COG3010">
    <property type="taxonomic scope" value="Bacteria"/>
</dbReference>
<dbReference type="HOGENOM" id="CLU_086300_0_0_6"/>
<dbReference type="OrthoDB" id="9810372at2"/>
<dbReference type="UniPathway" id="UPA00629">
    <property type="reaction ID" value="UER00682"/>
</dbReference>
<dbReference type="Proteomes" id="UP000000249">
    <property type="component" value="Chromosome 2"/>
</dbReference>
<dbReference type="GO" id="GO:0005829">
    <property type="term" value="C:cytosol"/>
    <property type="evidence" value="ECO:0007669"/>
    <property type="project" value="TreeGrafter"/>
</dbReference>
<dbReference type="GO" id="GO:0047465">
    <property type="term" value="F:N-acylglucosamine-6-phosphate 2-epimerase activity"/>
    <property type="evidence" value="ECO:0007669"/>
    <property type="project" value="UniProtKB-EC"/>
</dbReference>
<dbReference type="GO" id="GO:0005975">
    <property type="term" value="P:carbohydrate metabolic process"/>
    <property type="evidence" value="ECO:0007669"/>
    <property type="project" value="UniProtKB-UniRule"/>
</dbReference>
<dbReference type="GO" id="GO:0006053">
    <property type="term" value="P:N-acetylmannosamine catabolic process"/>
    <property type="evidence" value="ECO:0007669"/>
    <property type="project" value="TreeGrafter"/>
</dbReference>
<dbReference type="GO" id="GO:0019262">
    <property type="term" value="P:N-acetylneuraminate catabolic process"/>
    <property type="evidence" value="ECO:0007669"/>
    <property type="project" value="UniProtKB-UniRule"/>
</dbReference>
<dbReference type="CDD" id="cd04729">
    <property type="entry name" value="NanE"/>
    <property type="match status" value="1"/>
</dbReference>
<dbReference type="FunFam" id="3.20.20.70:FF:000035">
    <property type="entry name" value="Putative N-acetylmannosamine-6-phosphate 2-epimerase"/>
    <property type="match status" value="1"/>
</dbReference>
<dbReference type="Gene3D" id="3.20.20.70">
    <property type="entry name" value="Aldolase class I"/>
    <property type="match status" value="1"/>
</dbReference>
<dbReference type="HAMAP" id="MF_01235">
    <property type="entry name" value="ManNAc6P_epimer"/>
    <property type="match status" value="1"/>
</dbReference>
<dbReference type="InterPro" id="IPR013785">
    <property type="entry name" value="Aldolase_TIM"/>
</dbReference>
<dbReference type="InterPro" id="IPR007260">
    <property type="entry name" value="NanE"/>
</dbReference>
<dbReference type="InterPro" id="IPR011060">
    <property type="entry name" value="RibuloseP-bd_barrel"/>
</dbReference>
<dbReference type="NCBIfam" id="NF002231">
    <property type="entry name" value="PRK01130.1"/>
    <property type="match status" value="1"/>
</dbReference>
<dbReference type="PANTHER" id="PTHR36204">
    <property type="entry name" value="N-ACETYLMANNOSAMINE-6-PHOSPHATE 2-EPIMERASE-RELATED"/>
    <property type="match status" value="1"/>
</dbReference>
<dbReference type="PANTHER" id="PTHR36204:SF1">
    <property type="entry name" value="N-ACETYLMANNOSAMINE-6-PHOSPHATE 2-EPIMERASE-RELATED"/>
    <property type="match status" value="1"/>
</dbReference>
<dbReference type="Pfam" id="PF04131">
    <property type="entry name" value="NanE"/>
    <property type="match status" value="1"/>
</dbReference>
<dbReference type="SUPFAM" id="SSF51366">
    <property type="entry name" value="Ribulose-phoshate binding barrel"/>
    <property type="match status" value="1"/>
</dbReference>
<protein>
    <recommendedName>
        <fullName evidence="1">Putative N-acetylmannosamine-6-phosphate 2-epimerase</fullName>
        <ecNumber evidence="1">5.1.3.9</ecNumber>
    </recommendedName>
    <alternativeName>
        <fullName evidence="1">ManNAc-6-P epimerase</fullName>
    </alternativeName>
</protein>
<reference key="1">
    <citation type="submission" date="2007-03" db="EMBL/GenBank/DDBJ databases">
        <authorList>
            <person name="Heidelberg J."/>
        </authorList>
    </citation>
    <scope>NUCLEOTIDE SEQUENCE [LARGE SCALE GENOMIC DNA]</scope>
    <source>
        <strain>ATCC 39541 / Classical Ogawa 395 / O395</strain>
    </source>
</reference>
<reference key="2">
    <citation type="journal article" date="2008" name="PLoS ONE">
        <title>A recalibrated molecular clock and independent origins for the cholera pandemic clones.</title>
        <authorList>
            <person name="Feng L."/>
            <person name="Reeves P.R."/>
            <person name="Lan R."/>
            <person name="Ren Y."/>
            <person name="Gao C."/>
            <person name="Zhou Z."/>
            <person name="Ren Y."/>
            <person name="Cheng J."/>
            <person name="Wang W."/>
            <person name="Wang J."/>
            <person name="Qian W."/>
            <person name="Li D."/>
            <person name="Wang L."/>
        </authorList>
    </citation>
    <scope>NUCLEOTIDE SEQUENCE [LARGE SCALE GENOMIC DNA]</scope>
    <source>
        <strain>ATCC 39541 / Classical Ogawa 395 / O395</strain>
    </source>
</reference>
<keyword id="KW-0119">Carbohydrate metabolism</keyword>
<keyword id="KW-0413">Isomerase</keyword>
<sequence length="240" mass="25530">MRPVVRKNFLNIEELKRFLNGQTVVSIQPVTGSPLDKTDFIVAMAIAVEQAGAKALRIEGVNNVAAVSAAVTIPIIGIVKRDLPDSPIRITPFVSDVDGLANAGATVIAFDATDRTRPESRERIAQAIKNTGCFAMADCSTFEDGLWANSQGVEIVGSTLSGYVGDIEPTVPDFQLVKAFSEAGFFTMAEGRYNTPELAAKAIESGAVAVTVGSALTRLEVVTQWFNNATQVAGERKCAH</sequence>